<comment type="function">
    <text>Core component of nucleosome. Nucleosomes wrap and compact DNA into chromatin, limiting DNA accessibility to the cellular machineries which require DNA as a template. Histones thereby play a central role in transcription regulation, DNA repair, DNA replication and chromosomal stability. DNA accessibility is regulated via a complex set of post-translational modifications of histones, also called histone code, and nucleosome remodeling.</text>
</comment>
<comment type="subunit">
    <text>The nucleosome is a histone octamer containing two molecules each of H2A, H2B, H3 and H4 assembled in one H3-H4 heterotetramer and two H2A-H2B heterodimers. The octamer wraps approximately 147 bp of DNA.</text>
</comment>
<comment type="subcellular location">
    <subcellularLocation>
        <location evidence="1">Nucleus</location>
    </subcellularLocation>
    <subcellularLocation>
        <location evidence="1">Chromosome</location>
    </subcellularLocation>
</comment>
<comment type="domain">
    <text>Contains one SPKK motif which may interact with the minor groove of A/T-rich DNA sites. Phosphorylation of this motif may regulate DNA binding. This motif is reiterated in both termini of histone H1 and in the N-terminus of sea urchin histones H2B, but its presence in the C-terminus seems to be unique to plant H2A.</text>
</comment>
<comment type="similarity">
    <text evidence="3">Belongs to the histone H2A family.</text>
</comment>
<comment type="sequence caution" evidence="3">
    <conflict type="erroneous gene model prediction">
        <sequence resource="EMBL-CDS" id="AAS75248"/>
    </conflict>
</comment>
<evidence type="ECO:0000250" key="1"/>
<evidence type="ECO:0000256" key="2">
    <source>
        <dbReference type="SAM" id="MobiDB-lite"/>
    </source>
</evidence>
<evidence type="ECO:0000305" key="3"/>
<accession>Q75L11</accession>
<accession>A3AZA2</accession>
<accession>B7EN17</accession>
<accession>Q0DLA1</accession>
<keyword id="KW-0158">Chromosome</keyword>
<keyword id="KW-0238">DNA-binding</keyword>
<keyword id="KW-0544">Nucleosome core</keyword>
<keyword id="KW-0539">Nucleus</keyword>
<keyword id="KW-1185">Reference proteome</keyword>
<feature type="chain" id="PRO_0000239997" description="Probable histone H2A.6">
    <location>
        <begin position="1"/>
        <end position="156"/>
    </location>
</feature>
<feature type="region of interest" description="Disordered" evidence="2">
    <location>
        <begin position="1"/>
        <end position="26"/>
    </location>
</feature>
<feature type="region of interest" description="Disordered" evidence="2">
    <location>
        <begin position="129"/>
        <end position="156"/>
    </location>
</feature>
<feature type="short sequence motif" description="SPKK motif">
    <location>
        <begin position="149"/>
        <end position="152"/>
    </location>
</feature>
<feature type="compositionally biased region" description="Basic residues" evidence="2">
    <location>
        <begin position="9"/>
        <end position="26"/>
    </location>
</feature>
<feature type="compositionally biased region" description="Basic and acidic residues" evidence="2">
    <location>
        <begin position="130"/>
        <end position="147"/>
    </location>
</feature>
<proteinExistence type="evidence at transcript level"/>
<name>H2A6_ORYSJ</name>
<dbReference type="EMBL" id="AC093921">
    <property type="protein sequence ID" value="AAS75248.1"/>
    <property type="status" value="ALT_SEQ"/>
    <property type="molecule type" value="Genomic_DNA"/>
</dbReference>
<dbReference type="EMBL" id="AP008211">
    <property type="protein sequence ID" value="BAF16372.1"/>
    <property type="molecule type" value="Genomic_DNA"/>
</dbReference>
<dbReference type="EMBL" id="AP014961">
    <property type="protein sequence ID" value="BAS91950.1"/>
    <property type="molecule type" value="Genomic_DNA"/>
</dbReference>
<dbReference type="EMBL" id="CM000142">
    <property type="status" value="NOT_ANNOTATED_CDS"/>
    <property type="molecule type" value="Genomic_DNA"/>
</dbReference>
<dbReference type="EMBL" id="AK074018">
    <property type="protein sequence ID" value="BAG93764.1"/>
    <property type="molecule type" value="mRNA"/>
</dbReference>
<dbReference type="RefSeq" id="XP_015640563.1">
    <property type="nucleotide sequence ID" value="XM_015785077.1"/>
</dbReference>
<dbReference type="SMR" id="Q75L11"/>
<dbReference type="FunCoup" id="Q75L11">
    <property type="interactions" value="32"/>
</dbReference>
<dbReference type="STRING" id="39947.Q75L11"/>
<dbReference type="PaxDb" id="39947-Q75L11"/>
<dbReference type="EnsemblPlants" id="Os05t0113900-01">
    <property type="protein sequence ID" value="Os05t0113900-01"/>
    <property type="gene ID" value="Os05g0113900"/>
</dbReference>
<dbReference type="Gramene" id="Os05t0113900-01">
    <property type="protein sequence ID" value="Os05t0113900-01"/>
    <property type="gene ID" value="Os05g0113900"/>
</dbReference>
<dbReference type="KEGG" id="dosa:Os05g0113900"/>
<dbReference type="eggNOG" id="KOG1756">
    <property type="taxonomic scope" value="Eukaryota"/>
</dbReference>
<dbReference type="HOGENOM" id="CLU_062828_1_1_1"/>
<dbReference type="InParanoid" id="Q75L11"/>
<dbReference type="OMA" id="HNSETHE"/>
<dbReference type="OrthoDB" id="10253031at2759"/>
<dbReference type="Proteomes" id="UP000000763">
    <property type="component" value="Chromosome 5"/>
</dbReference>
<dbReference type="Proteomes" id="UP000007752">
    <property type="component" value="Chromosome 5"/>
</dbReference>
<dbReference type="Proteomes" id="UP000059680">
    <property type="component" value="Chromosome 5"/>
</dbReference>
<dbReference type="GO" id="GO:0000786">
    <property type="term" value="C:nucleosome"/>
    <property type="evidence" value="ECO:0000318"/>
    <property type="project" value="GO_Central"/>
</dbReference>
<dbReference type="GO" id="GO:0005634">
    <property type="term" value="C:nucleus"/>
    <property type="evidence" value="ECO:0000318"/>
    <property type="project" value="GO_Central"/>
</dbReference>
<dbReference type="GO" id="GO:0003677">
    <property type="term" value="F:DNA binding"/>
    <property type="evidence" value="ECO:0007669"/>
    <property type="project" value="UniProtKB-KW"/>
</dbReference>
<dbReference type="GO" id="GO:0046982">
    <property type="term" value="F:protein heterodimerization activity"/>
    <property type="evidence" value="ECO:0007669"/>
    <property type="project" value="InterPro"/>
</dbReference>
<dbReference type="GO" id="GO:0030527">
    <property type="term" value="F:structural constituent of chromatin"/>
    <property type="evidence" value="ECO:0000318"/>
    <property type="project" value="GO_Central"/>
</dbReference>
<dbReference type="GO" id="GO:0031507">
    <property type="term" value="P:heterochromatin formation"/>
    <property type="evidence" value="ECO:0000318"/>
    <property type="project" value="GO_Central"/>
</dbReference>
<dbReference type="CDD" id="cd00074">
    <property type="entry name" value="HFD_H2A"/>
    <property type="match status" value="1"/>
</dbReference>
<dbReference type="FunFam" id="1.10.20.10:FF:000026">
    <property type="entry name" value="Histone H2A"/>
    <property type="match status" value="1"/>
</dbReference>
<dbReference type="Gene3D" id="1.10.20.10">
    <property type="entry name" value="Histone, subunit A"/>
    <property type="match status" value="1"/>
</dbReference>
<dbReference type="InterPro" id="IPR009072">
    <property type="entry name" value="Histone-fold"/>
</dbReference>
<dbReference type="InterPro" id="IPR002119">
    <property type="entry name" value="Histone_H2A"/>
</dbReference>
<dbReference type="InterPro" id="IPR007125">
    <property type="entry name" value="Histone_H2A/H2B/H3"/>
</dbReference>
<dbReference type="InterPro" id="IPR032454">
    <property type="entry name" value="Histone_H2A_C"/>
</dbReference>
<dbReference type="InterPro" id="IPR032458">
    <property type="entry name" value="Histone_H2A_CS"/>
</dbReference>
<dbReference type="PANTHER" id="PTHR23430">
    <property type="entry name" value="HISTONE H2A"/>
    <property type="match status" value="1"/>
</dbReference>
<dbReference type="Pfam" id="PF00125">
    <property type="entry name" value="Histone"/>
    <property type="match status" value="1"/>
</dbReference>
<dbReference type="Pfam" id="PF16211">
    <property type="entry name" value="Histone_H2A_C"/>
    <property type="match status" value="1"/>
</dbReference>
<dbReference type="PRINTS" id="PR00620">
    <property type="entry name" value="HISTONEH2A"/>
</dbReference>
<dbReference type="SMART" id="SM00414">
    <property type="entry name" value="H2A"/>
    <property type="match status" value="1"/>
</dbReference>
<dbReference type="SUPFAM" id="SSF47113">
    <property type="entry name" value="Histone-fold"/>
    <property type="match status" value="1"/>
</dbReference>
<dbReference type="PROSITE" id="PS00046">
    <property type="entry name" value="HISTONE_H2A"/>
    <property type="match status" value="1"/>
</dbReference>
<gene>
    <name type="ordered locus">Os05g0113900</name>
    <name type="ordered locus">LOC_Os05g02300</name>
    <name type="ORF">OsJ_016124</name>
    <name type="ORF">OSJNBb0041A22.10</name>
</gene>
<reference key="1">
    <citation type="journal article" date="2005" name="Mol. Genet. Genomics">
        <title>A fine physical map of the rice chromosome 5.</title>
        <authorList>
            <person name="Cheng C.-H."/>
            <person name="Chung M.C."/>
            <person name="Liu S.-M."/>
            <person name="Chen S.-K."/>
            <person name="Kao F.Y."/>
            <person name="Lin S.-J."/>
            <person name="Hsiao S.-H."/>
            <person name="Tseng I.C."/>
            <person name="Hsing Y.-I.C."/>
            <person name="Wu H.-P."/>
            <person name="Chen C.-S."/>
            <person name="Shaw J.-F."/>
            <person name="Wu J."/>
            <person name="Matsumoto T."/>
            <person name="Sasaki T."/>
            <person name="Chen H.-C."/>
            <person name="Chow T.-Y."/>
        </authorList>
    </citation>
    <scope>NUCLEOTIDE SEQUENCE [LARGE SCALE GENOMIC DNA]</scope>
    <source>
        <strain>cv. Nipponbare</strain>
    </source>
</reference>
<reference key="2">
    <citation type="journal article" date="2005" name="Nature">
        <title>The map-based sequence of the rice genome.</title>
        <authorList>
            <consortium name="International rice genome sequencing project (IRGSP)"/>
        </authorList>
    </citation>
    <scope>NUCLEOTIDE SEQUENCE [LARGE SCALE GENOMIC DNA]</scope>
    <source>
        <strain>cv. Nipponbare</strain>
    </source>
</reference>
<reference key="3">
    <citation type="journal article" date="2008" name="Nucleic Acids Res.">
        <title>The rice annotation project database (RAP-DB): 2008 update.</title>
        <authorList>
            <consortium name="The rice annotation project (RAP)"/>
        </authorList>
    </citation>
    <scope>GENOME REANNOTATION</scope>
    <source>
        <strain>cv. Nipponbare</strain>
    </source>
</reference>
<reference key="4">
    <citation type="journal article" date="2013" name="Rice">
        <title>Improvement of the Oryza sativa Nipponbare reference genome using next generation sequence and optical map data.</title>
        <authorList>
            <person name="Kawahara Y."/>
            <person name="de la Bastide M."/>
            <person name="Hamilton J.P."/>
            <person name="Kanamori H."/>
            <person name="McCombie W.R."/>
            <person name="Ouyang S."/>
            <person name="Schwartz D.C."/>
            <person name="Tanaka T."/>
            <person name="Wu J."/>
            <person name="Zhou S."/>
            <person name="Childs K.L."/>
            <person name="Davidson R.M."/>
            <person name="Lin H."/>
            <person name="Quesada-Ocampo L."/>
            <person name="Vaillancourt B."/>
            <person name="Sakai H."/>
            <person name="Lee S.S."/>
            <person name="Kim J."/>
            <person name="Numa H."/>
            <person name="Itoh T."/>
            <person name="Buell C.R."/>
            <person name="Matsumoto T."/>
        </authorList>
    </citation>
    <scope>GENOME REANNOTATION</scope>
    <source>
        <strain>cv. Nipponbare</strain>
    </source>
</reference>
<reference key="5">
    <citation type="journal article" date="2005" name="PLoS Biol.">
        <title>The genomes of Oryza sativa: a history of duplications.</title>
        <authorList>
            <person name="Yu J."/>
            <person name="Wang J."/>
            <person name="Lin W."/>
            <person name="Li S."/>
            <person name="Li H."/>
            <person name="Zhou J."/>
            <person name="Ni P."/>
            <person name="Dong W."/>
            <person name="Hu S."/>
            <person name="Zeng C."/>
            <person name="Zhang J."/>
            <person name="Zhang Y."/>
            <person name="Li R."/>
            <person name="Xu Z."/>
            <person name="Li S."/>
            <person name="Li X."/>
            <person name="Zheng H."/>
            <person name="Cong L."/>
            <person name="Lin L."/>
            <person name="Yin J."/>
            <person name="Geng J."/>
            <person name="Li G."/>
            <person name="Shi J."/>
            <person name="Liu J."/>
            <person name="Lv H."/>
            <person name="Li J."/>
            <person name="Wang J."/>
            <person name="Deng Y."/>
            <person name="Ran L."/>
            <person name="Shi X."/>
            <person name="Wang X."/>
            <person name="Wu Q."/>
            <person name="Li C."/>
            <person name="Ren X."/>
            <person name="Wang J."/>
            <person name="Wang X."/>
            <person name="Li D."/>
            <person name="Liu D."/>
            <person name="Zhang X."/>
            <person name="Ji Z."/>
            <person name="Zhao W."/>
            <person name="Sun Y."/>
            <person name="Zhang Z."/>
            <person name="Bao J."/>
            <person name="Han Y."/>
            <person name="Dong L."/>
            <person name="Ji J."/>
            <person name="Chen P."/>
            <person name="Wu S."/>
            <person name="Liu J."/>
            <person name="Xiao Y."/>
            <person name="Bu D."/>
            <person name="Tan J."/>
            <person name="Yang L."/>
            <person name="Ye C."/>
            <person name="Zhang J."/>
            <person name="Xu J."/>
            <person name="Zhou Y."/>
            <person name="Yu Y."/>
            <person name="Zhang B."/>
            <person name="Zhuang S."/>
            <person name="Wei H."/>
            <person name="Liu B."/>
            <person name="Lei M."/>
            <person name="Yu H."/>
            <person name="Li Y."/>
            <person name="Xu H."/>
            <person name="Wei S."/>
            <person name="He X."/>
            <person name="Fang L."/>
            <person name="Zhang Z."/>
            <person name="Zhang Y."/>
            <person name="Huang X."/>
            <person name="Su Z."/>
            <person name="Tong W."/>
            <person name="Li J."/>
            <person name="Tong Z."/>
            <person name="Li S."/>
            <person name="Ye J."/>
            <person name="Wang L."/>
            <person name="Fang L."/>
            <person name="Lei T."/>
            <person name="Chen C.-S."/>
            <person name="Chen H.-C."/>
            <person name="Xu Z."/>
            <person name="Li H."/>
            <person name="Huang H."/>
            <person name="Zhang F."/>
            <person name="Xu H."/>
            <person name="Li N."/>
            <person name="Zhao C."/>
            <person name="Li S."/>
            <person name="Dong L."/>
            <person name="Huang Y."/>
            <person name="Li L."/>
            <person name="Xi Y."/>
            <person name="Qi Q."/>
            <person name="Li W."/>
            <person name="Zhang B."/>
            <person name="Hu W."/>
            <person name="Zhang Y."/>
            <person name="Tian X."/>
            <person name="Jiao Y."/>
            <person name="Liang X."/>
            <person name="Jin J."/>
            <person name="Gao L."/>
            <person name="Zheng W."/>
            <person name="Hao B."/>
            <person name="Liu S.-M."/>
            <person name="Wang W."/>
            <person name="Yuan L."/>
            <person name="Cao M."/>
            <person name="McDermott J."/>
            <person name="Samudrala R."/>
            <person name="Wang J."/>
            <person name="Wong G.K.-S."/>
            <person name="Yang H."/>
        </authorList>
    </citation>
    <scope>NUCLEOTIDE SEQUENCE [LARGE SCALE GENOMIC DNA]</scope>
    <source>
        <strain>cv. Nipponbare</strain>
    </source>
</reference>
<reference key="6">
    <citation type="journal article" date="2003" name="Science">
        <title>Collection, mapping, and annotation of over 28,000 cDNA clones from japonica rice.</title>
        <authorList>
            <consortium name="The rice full-length cDNA consortium"/>
        </authorList>
    </citation>
    <scope>NUCLEOTIDE SEQUENCE [LARGE SCALE MRNA]</scope>
    <source>
        <strain>cv. Nipponbare</strain>
    </source>
</reference>
<protein>
    <recommendedName>
        <fullName>Probable histone H2A.6</fullName>
    </recommendedName>
</protein>
<sequence>MDVGVGGKAAKKAVGRKLGGPKKKPVSRSVKAGLQFPVGRIGRYLKKGRYAQRVGTGAPVYLAAVLEYLAAEVLELAGNAARDNKKNRIIPRHVLLAIRNDEELGKLLAGVTIAHGGVLPNINPVLLPKKTAEKADKPAKASKDKAAKSPKKQARS</sequence>
<organism>
    <name type="scientific">Oryza sativa subsp. japonica</name>
    <name type="common">Rice</name>
    <dbReference type="NCBI Taxonomy" id="39947"/>
    <lineage>
        <taxon>Eukaryota</taxon>
        <taxon>Viridiplantae</taxon>
        <taxon>Streptophyta</taxon>
        <taxon>Embryophyta</taxon>
        <taxon>Tracheophyta</taxon>
        <taxon>Spermatophyta</taxon>
        <taxon>Magnoliopsida</taxon>
        <taxon>Liliopsida</taxon>
        <taxon>Poales</taxon>
        <taxon>Poaceae</taxon>
        <taxon>BOP clade</taxon>
        <taxon>Oryzoideae</taxon>
        <taxon>Oryzeae</taxon>
        <taxon>Oryzinae</taxon>
        <taxon>Oryza</taxon>
        <taxon>Oryza sativa</taxon>
    </lineage>
</organism>